<proteinExistence type="evidence at protein level"/>
<dbReference type="EC" id="1.14.11.-" evidence="5 6 7"/>
<dbReference type="EMBL" id="AB005241">
    <property type="protein sequence ID" value="BAB11549.1"/>
    <property type="molecule type" value="Genomic_DNA"/>
</dbReference>
<dbReference type="EMBL" id="CP002688">
    <property type="protein sequence ID" value="AED90897.1"/>
    <property type="molecule type" value="Genomic_DNA"/>
</dbReference>
<dbReference type="EMBL" id="AY039893">
    <property type="protein sequence ID" value="AAK63997.1"/>
    <property type="molecule type" value="mRNA"/>
</dbReference>
<dbReference type="EMBL" id="AY133665">
    <property type="protein sequence ID" value="AAM91495.1"/>
    <property type="molecule type" value="mRNA"/>
</dbReference>
<dbReference type="EMBL" id="AY085111">
    <property type="protein sequence ID" value="AAM61665.1"/>
    <property type="molecule type" value="mRNA"/>
</dbReference>
<dbReference type="RefSeq" id="NP_196179.1">
    <property type="nucleotide sequence ID" value="NM_120642.3"/>
</dbReference>
<dbReference type="PDB" id="6LSV">
    <property type="method" value="X-ray"/>
    <property type="resolution" value="2.65 A"/>
    <property type="chains" value="A/B=18-370"/>
</dbReference>
<dbReference type="PDBsum" id="6LSV"/>
<dbReference type="SMR" id="Q9FFF6"/>
<dbReference type="FunCoup" id="Q9FFF6">
    <property type="interactions" value="12"/>
</dbReference>
<dbReference type="STRING" id="3702.Q9FFF6"/>
<dbReference type="iPTMnet" id="Q9FFF6"/>
<dbReference type="PaxDb" id="3702-AT5G05600.1"/>
<dbReference type="ProteomicsDB" id="222154"/>
<dbReference type="EnsemblPlants" id="AT5G05600.1">
    <property type="protein sequence ID" value="AT5G05600.1"/>
    <property type="gene ID" value="AT5G05600"/>
</dbReference>
<dbReference type="GeneID" id="830443"/>
<dbReference type="Gramene" id="AT5G05600.1">
    <property type="protein sequence ID" value="AT5G05600.1"/>
    <property type="gene ID" value="AT5G05600"/>
</dbReference>
<dbReference type="KEGG" id="ath:AT5G05600"/>
<dbReference type="Araport" id="AT5G05600"/>
<dbReference type="TAIR" id="AT5G05600">
    <property type="gene designation" value="JOX2"/>
</dbReference>
<dbReference type="eggNOG" id="KOG0143">
    <property type="taxonomic scope" value="Eukaryota"/>
</dbReference>
<dbReference type="HOGENOM" id="CLU_010119_16_0_1"/>
<dbReference type="InParanoid" id="Q9FFF6"/>
<dbReference type="OMA" id="QRINPFE"/>
<dbReference type="OrthoDB" id="288590at2759"/>
<dbReference type="PhylomeDB" id="Q9FFF6"/>
<dbReference type="SABIO-RK" id="Q9FFF6"/>
<dbReference type="PRO" id="PR:Q9FFF6"/>
<dbReference type="Proteomes" id="UP000006548">
    <property type="component" value="Chromosome 5"/>
</dbReference>
<dbReference type="ExpressionAtlas" id="Q9FFF6">
    <property type="expression patterns" value="baseline and differential"/>
</dbReference>
<dbReference type="GO" id="GO:0005829">
    <property type="term" value="C:cytosol"/>
    <property type="evidence" value="ECO:0000314"/>
    <property type="project" value="TAIR"/>
</dbReference>
<dbReference type="GO" id="GO:0051213">
    <property type="term" value="F:dioxygenase activity"/>
    <property type="evidence" value="ECO:0007669"/>
    <property type="project" value="UniProtKB-KW"/>
</dbReference>
<dbReference type="GO" id="GO:0005506">
    <property type="term" value="F:iron ion binding"/>
    <property type="evidence" value="ECO:0000314"/>
    <property type="project" value="UniProtKB"/>
</dbReference>
<dbReference type="GO" id="GO:0120091">
    <property type="term" value="F:jasmonic acid hydrolase"/>
    <property type="evidence" value="ECO:0000314"/>
    <property type="project" value="TAIR"/>
</dbReference>
<dbReference type="GO" id="GO:0097237">
    <property type="term" value="P:cellular response to toxic substance"/>
    <property type="evidence" value="ECO:0000315"/>
    <property type="project" value="TAIR"/>
</dbReference>
<dbReference type="GO" id="GO:0006952">
    <property type="term" value="P:defense response"/>
    <property type="evidence" value="ECO:0007669"/>
    <property type="project" value="UniProtKB-KW"/>
</dbReference>
<dbReference type="GO" id="GO:1900366">
    <property type="term" value="P:negative regulation of defense response to insect"/>
    <property type="evidence" value="ECO:0000315"/>
    <property type="project" value="UniProtKB"/>
</dbReference>
<dbReference type="GO" id="GO:1900150">
    <property type="term" value="P:regulation of defense response to fungus"/>
    <property type="evidence" value="ECO:0000315"/>
    <property type="project" value="UniProtKB"/>
</dbReference>
<dbReference type="GO" id="GO:2000022">
    <property type="term" value="P:regulation of jasmonic acid mediated signaling pathway"/>
    <property type="evidence" value="ECO:0000316"/>
    <property type="project" value="TAIR"/>
</dbReference>
<dbReference type="FunFam" id="2.60.120.330:FF:000008">
    <property type="entry name" value="Jasmonate-regulated gene 21"/>
    <property type="match status" value="1"/>
</dbReference>
<dbReference type="Gene3D" id="2.60.120.330">
    <property type="entry name" value="B-lactam Antibiotic, Isopenicillin N Synthase, Chain"/>
    <property type="match status" value="1"/>
</dbReference>
<dbReference type="InterPro" id="IPR026992">
    <property type="entry name" value="DIOX_N"/>
</dbReference>
<dbReference type="InterPro" id="IPR044861">
    <property type="entry name" value="IPNS-like_FE2OG_OXY"/>
</dbReference>
<dbReference type="InterPro" id="IPR027443">
    <property type="entry name" value="IPNS-like_sf"/>
</dbReference>
<dbReference type="InterPro" id="IPR005123">
    <property type="entry name" value="Oxoglu/Fe-dep_dioxygenase_dom"/>
</dbReference>
<dbReference type="InterPro" id="IPR050295">
    <property type="entry name" value="Plant_2OG-oxidoreductases"/>
</dbReference>
<dbReference type="PANTHER" id="PTHR47991">
    <property type="entry name" value="OXOGLUTARATE/IRON-DEPENDENT DIOXYGENASE"/>
    <property type="match status" value="1"/>
</dbReference>
<dbReference type="Pfam" id="PF03171">
    <property type="entry name" value="2OG-FeII_Oxy"/>
    <property type="match status" value="1"/>
</dbReference>
<dbReference type="Pfam" id="PF14226">
    <property type="entry name" value="DIOX_N"/>
    <property type="match status" value="1"/>
</dbReference>
<dbReference type="PRINTS" id="PR00682">
    <property type="entry name" value="IPNSYNTHASE"/>
</dbReference>
<dbReference type="SUPFAM" id="SSF51197">
    <property type="entry name" value="Clavaminate synthase-like"/>
    <property type="match status" value="1"/>
</dbReference>
<dbReference type="PROSITE" id="PS51471">
    <property type="entry name" value="FE2OG_OXY"/>
    <property type="match status" value="1"/>
</dbReference>
<protein>
    <recommendedName>
        <fullName evidence="8">Jasmonate-induced oxygenase 2</fullName>
        <ecNumber evidence="5 6 7">1.14.11.-</ecNumber>
    </recommendedName>
    <alternativeName>
        <fullName evidence="10">2-oxoglutarate-dependent dioxygenase JOX2</fullName>
    </alternativeName>
    <alternativeName>
        <fullName evidence="9">Jasmonic acid oxidase 2</fullName>
    </alternativeName>
</protein>
<keyword id="KW-0002">3D-structure</keyword>
<keyword id="KW-0223">Dioxygenase</keyword>
<keyword id="KW-0408">Iron</keyword>
<keyword id="KW-1184">Jasmonic acid signaling pathway</keyword>
<keyword id="KW-0479">Metal-binding</keyword>
<keyword id="KW-0560">Oxidoreductase</keyword>
<keyword id="KW-0611">Plant defense</keyword>
<keyword id="KW-1185">Reference proteome</keyword>
<evidence type="ECO:0000255" key="1">
    <source>
        <dbReference type="PROSITE-ProRule" id="PRU00805"/>
    </source>
</evidence>
<evidence type="ECO:0000269" key="2">
    <source>
    </source>
</evidence>
<evidence type="ECO:0000269" key="3">
    <source>
    </source>
</evidence>
<evidence type="ECO:0000269" key="4">
    <source>
    </source>
</evidence>
<evidence type="ECO:0000269" key="5">
    <source>
    </source>
</evidence>
<evidence type="ECO:0000269" key="6">
    <source>
    </source>
</evidence>
<evidence type="ECO:0000269" key="7">
    <source>
    </source>
</evidence>
<evidence type="ECO:0000303" key="8">
    <source>
    </source>
</evidence>
<evidence type="ECO:0000303" key="9">
    <source>
    </source>
</evidence>
<evidence type="ECO:0000305" key="10"/>
<evidence type="ECO:0000312" key="11">
    <source>
        <dbReference type="Araport" id="AT5G05600"/>
    </source>
</evidence>
<evidence type="ECO:0000312" key="12">
    <source>
        <dbReference type="EMBL" id="BAB11549.1"/>
    </source>
</evidence>
<evidence type="ECO:0007744" key="13">
    <source>
        <dbReference type="PDB" id="6LSV"/>
    </source>
</evidence>
<evidence type="ECO:0007829" key="14">
    <source>
        <dbReference type="PDB" id="6LSV"/>
    </source>
</evidence>
<reference key="1">
    <citation type="journal article" date="1997" name="DNA Res.">
        <title>Structural analysis of Arabidopsis thaliana chromosome 5. I. Sequence features of the 1.6 Mb regions covered by twenty physically assigned P1 clones.</title>
        <authorList>
            <person name="Sato S."/>
            <person name="Kotani H."/>
            <person name="Nakamura Y."/>
            <person name="Kaneko T."/>
            <person name="Asamizu E."/>
            <person name="Fukami M."/>
            <person name="Miyajima N."/>
            <person name="Tabata S."/>
        </authorList>
    </citation>
    <scope>NUCLEOTIDE SEQUENCE [LARGE SCALE GENOMIC DNA]</scope>
    <source>
        <strain>cv. Columbia</strain>
    </source>
</reference>
<reference key="2">
    <citation type="journal article" date="2017" name="Plant J.">
        <title>Araport11: a complete reannotation of the Arabidopsis thaliana reference genome.</title>
        <authorList>
            <person name="Cheng C.Y."/>
            <person name="Krishnakumar V."/>
            <person name="Chan A.P."/>
            <person name="Thibaud-Nissen F."/>
            <person name="Schobel S."/>
            <person name="Town C.D."/>
        </authorList>
    </citation>
    <scope>GENOME REANNOTATION</scope>
    <source>
        <strain>cv. Columbia</strain>
    </source>
</reference>
<reference key="3">
    <citation type="journal article" date="2003" name="Science">
        <title>Empirical analysis of transcriptional activity in the Arabidopsis genome.</title>
        <authorList>
            <person name="Yamada K."/>
            <person name="Lim J."/>
            <person name="Dale J.M."/>
            <person name="Chen H."/>
            <person name="Shinn P."/>
            <person name="Palm C.J."/>
            <person name="Southwick A.M."/>
            <person name="Wu H.C."/>
            <person name="Kim C.J."/>
            <person name="Nguyen M."/>
            <person name="Pham P.K."/>
            <person name="Cheuk R.F."/>
            <person name="Karlin-Newmann G."/>
            <person name="Liu S.X."/>
            <person name="Lam B."/>
            <person name="Sakano H."/>
            <person name="Wu T."/>
            <person name="Yu G."/>
            <person name="Miranda M."/>
            <person name="Quach H.L."/>
            <person name="Tripp M."/>
            <person name="Chang C.H."/>
            <person name="Lee J.M."/>
            <person name="Toriumi M.J."/>
            <person name="Chan M.M."/>
            <person name="Tang C.C."/>
            <person name="Onodera C.S."/>
            <person name="Deng J.M."/>
            <person name="Akiyama K."/>
            <person name="Ansari Y."/>
            <person name="Arakawa T."/>
            <person name="Banh J."/>
            <person name="Banno F."/>
            <person name="Bowser L."/>
            <person name="Brooks S.Y."/>
            <person name="Carninci P."/>
            <person name="Chao Q."/>
            <person name="Choy N."/>
            <person name="Enju A."/>
            <person name="Goldsmith A.D."/>
            <person name="Gurjal M."/>
            <person name="Hansen N.F."/>
            <person name="Hayashizaki Y."/>
            <person name="Johnson-Hopson C."/>
            <person name="Hsuan V.W."/>
            <person name="Iida K."/>
            <person name="Karnes M."/>
            <person name="Khan S."/>
            <person name="Koesema E."/>
            <person name="Ishida J."/>
            <person name="Jiang P.X."/>
            <person name="Jones T."/>
            <person name="Kawai J."/>
            <person name="Kamiya A."/>
            <person name="Meyers C."/>
            <person name="Nakajima M."/>
            <person name="Narusaka M."/>
            <person name="Seki M."/>
            <person name="Sakurai T."/>
            <person name="Satou M."/>
            <person name="Tamse R."/>
            <person name="Vaysberg M."/>
            <person name="Wallender E.K."/>
            <person name="Wong C."/>
            <person name="Yamamura Y."/>
            <person name="Yuan S."/>
            <person name="Shinozaki K."/>
            <person name="Davis R.W."/>
            <person name="Theologis A."/>
            <person name="Ecker J.R."/>
        </authorList>
    </citation>
    <scope>NUCLEOTIDE SEQUENCE [LARGE SCALE MRNA]</scope>
    <source>
        <strain>cv. Columbia</strain>
    </source>
</reference>
<reference key="4">
    <citation type="submission" date="2002-03" db="EMBL/GenBank/DDBJ databases">
        <title>Full-length cDNA from Arabidopsis thaliana.</title>
        <authorList>
            <person name="Brover V.V."/>
            <person name="Troukhan M.E."/>
            <person name="Alexandrov N.A."/>
            <person name="Lu Y.-P."/>
            <person name="Flavell R.B."/>
            <person name="Feldmann K.A."/>
        </authorList>
    </citation>
    <scope>NUCLEOTIDE SEQUENCE [LARGE SCALE MRNA] OF 17-371</scope>
</reference>
<reference key="5">
    <citation type="journal article" date="2001" name="Plant Physiol.">
        <title>Genes that are uniquely stress regulated in salt overly sensitive (sos) mutants.</title>
        <authorList>
            <person name="Gong Z."/>
            <person name="Koiwa H."/>
            <person name="Cushman M.A."/>
            <person name="Ray A."/>
            <person name="Bufford D."/>
            <person name="Kore-eda S."/>
            <person name="Matsumoto T.K."/>
            <person name="Zhu J."/>
            <person name="Cushman J.C."/>
            <person name="Bressan R.A."/>
            <person name="Hasegawa P.M."/>
        </authorList>
    </citation>
    <scope>INDUCTION BY SALT STRESS</scope>
</reference>
<reference key="6">
    <citation type="journal article" date="2007" name="New Phytol.">
        <title>Arabidopsis thaliana plants acclimated to low dose rates of ultraviolet B radiation show specific changes in morphology and gene expression in the absence of stress symptoms.</title>
        <authorList>
            <person name="Hectors K."/>
            <person name="Prinsen E."/>
            <person name="De Coen W."/>
            <person name="Jansen M.A."/>
            <person name="Guisez Y."/>
        </authorList>
    </citation>
    <scope>INDUCTION</scope>
</reference>
<reference key="7">
    <citation type="journal article" date="2016" name="J. Hazard. Mater.">
        <title>Detoxification of polycyclic aromatic hydrocarbons (PAHs) in Arabidopsis thaliana involves a putative flavonol synthase.</title>
        <authorList>
            <person name="Hernandez-Vega J.C."/>
            <person name="Cady B."/>
            <person name="Kayanja G."/>
            <person name="Mauriello A."/>
            <person name="Cervantes N."/>
            <person name="Gillespie A."/>
            <person name="Lavia L."/>
            <person name="Trujillo J."/>
            <person name="Alkio M."/>
            <person name="Colon-Carmona A."/>
        </authorList>
    </citation>
    <scope>FUNCTION</scope>
    <scope>INDUCTION BY PHENANTHRENE</scope>
    <scope>DISRUPTION PHENOTYPE</scope>
</reference>
<reference key="8">
    <citation type="journal article" date="2017" name="Mol. Plant">
        <title>Jasmonic acid oxidase 2 hydroxylates jasmonic acid and represses basal defense and resistance responses against Botrytis cinerea infection.</title>
        <authorList>
            <person name="Smirnova E."/>
            <person name="Marquis V."/>
            <person name="Poirier L."/>
            <person name="Aubert Y."/>
            <person name="Zumsteg J."/>
            <person name="Menard R."/>
            <person name="Miesch L."/>
            <person name="Heitz T."/>
        </authorList>
    </citation>
    <scope>FUNCTION</scope>
    <scope>CATALYTIC ACTIVITY</scope>
    <scope>COFACTOR</scope>
    <scope>INDUCTION</scope>
</reference>
<reference key="9">
    <citation type="journal article" date="2017" name="Proc. Natl. Acad. Sci. U.S.A.">
        <title>Arabidopsis JASMONATE-INDUCED OXYGENASES down-regulate plant immunity by hydroxylation and inactivation of the hormone jasmonic acid.</title>
        <authorList>
            <person name="Caarls L."/>
            <person name="Elberse J."/>
            <person name="Awwanah M."/>
            <person name="Ludwig N.R."/>
            <person name="de Vries M."/>
            <person name="Zeilmaker T."/>
            <person name="Van Wees S.C.M."/>
            <person name="Schuurink R.C."/>
            <person name="Van den Ackerveken G."/>
        </authorList>
    </citation>
    <scope>FUNCTION</scope>
    <scope>CATALYTIC ACTIVITY</scope>
    <scope>COFACTOR</scope>
    <scope>INDUCTION</scope>
    <scope>DISRUPTION PHENOTYPE</scope>
</reference>
<reference key="10">
    <citation type="journal article" date="2021" name="Mol. Plant">
        <title>Structure-guided analysis of the Arabidopsis JASMONATE-INDUCED OXYGENASE (JOX) 2 reveals key residues of plant JOX recognizing jasmonic acid substrate.</title>
        <authorList>
            <person name="Zhang X."/>
            <person name="Wang D."/>
            <person name="Elberse J."/>
            <person name="Qi L."/>
            <person name="Shi W."/>
            <person name="Peng Y.L."/>
            <person name="Schuurink R.C."/>
            <person name="Van den Ackerveken G."/>
            <person name="Liu J."/>
        </authorList>
    </citation>
    <scope>X-RAY CRYSTALLOGRAPHY (2.65 ANGSTROMS) OF 18-370 IN COMPLEX WITH 2-OXOGLUTARATE; JASMONATE AND IRON ION</scope>
    <scope>FUNCTION</scope>
    <scope>CATALYTIC ACTIVITY</scope>
    <scope>COFACTOR</scope>
    <scope>BIOPHYSICOCHEMICAL PROPERTIES</scope>
    <scope>MUTAGENESIS OF TYR-135; LEU-142; PHE-157; ARG-225; HIS-244; ASP-246; PHE-317; PHE-346; ARG-350; ILE-353 AND ARG-354</scope>
</reference>
<sequence>MNKNKIDVKIETKKGSMDEWPEPIVRVQSLAESNLSSLPDRYIKPASLRPTTTEDAPTATNIPIIDLEGLFSEEGLSDDVIMARISEACRGWGFFQVVNHGVKPELMDAARENWREFFHMPVNAKETYSNSPRTYEGYGSRLGVEKGASLDWSDYYFLHLLPHHLKDFNKWPSFPPTIREVIDEYGEELVKLSGRIMRVLSTNLGLKEDKFQEAFGGENIGACLRVNYYPKCPRPELALGLSPHSDPGGMTILLPDDQVFGLQVRKDDTWITVKPHPHAFIVNIGDQIQILSNSTYKSVEHRVIVNSDKERVSLAFFYNPKSDIPIQPLQELVSTHNPPLYPPMTFDQYRLFIRTQGPQGKSHVESHISPR</sequence>
<name>JOX2_ARATH</name>
<feature type="chain" id="PRO_0000438435" description="Jasmonate-induced oxygenase 2">
    <location>
        <begin position="1"/>
        <end position="371"/>
    </location>
</feature>
<feature type="domain" description="Fe2OG dioxygenase" evidence="1">
    <location>
        <begin position="219"/>
        <end position="320"/>
    </location>
</feature>
<feature type="binding site" evidence="7 13">
    <location>
        <position position="225"/>
    </location>
    <ligand>
        <name>jasmonate</name>
        <dbReference type="ChEBI" id="CHEBI:58431"/>
    </ligand>
</feature>
<feature type="binding site" evidence="7 13">
    <location>
        <position position="227"/>
    </location>
    <ligand>
        <name>2-oxoglutarate</name>
        <dbReference type="ChEBI" id="CHEBI:16810"/>
    </ligand>
</feature>
<feature type="binding site" evidence="7 13">
    <location>
        <position position="229"/>
    </location>
    <ligand>
        <name>2-oxoglutarate</name>
        <dbReference type="ChEBI" id="CHEBI:16810"/>
    </ligand>
</feature>
<feature type="binding site" evidence="1 7 13">
    <location>
        <position position="244"/>
    </location>
    <ligand>
        <name>Fe cation</name>
        <dbReference type="ChEBI" id="CHEBI:24875"/>
    </ligand>
</feature>
<feature type="binding site" evidence="1 7 13">
    <location>
        <position position="246"/>
    </location>
    <ligand>
        <name>Fe cation</name>
        <dbReference type="ChEBI" id="CHEBI:24875"/>
    </ligand>
</feature>
<feature type="binding site" evidence="1 7 13">
    <location>
        <position position="301"/>
    </location>
    <ligand>
        <name>Fe cation</name>
        <dbReference type="ChEBI" id="CHEBI:24875"/>
    </ligand>
</feature>
<feature type="binding site" evidence="1 7 13">
    <location>
        <position position="311"/>
    </location>
    <ligand>
        <name>2-oxoglutarate</name>
        <dbReference type="ChEBI" id="CHEBI:16810"/>
    </ligand>
</feature>
<feature type="binding site" evidence="7 13">
    <location>
        <position position="313"/>
    </location>
    <ligand>
        <name>2-oxoglutarate</name>
        <dbReference type="ChEBI" id="CHEBI:16810"/>
    </ligand>
</feature>
<feature type="binding site" evidence="7 13">
    <location>
        <position position="350"/>
    </location>
    <ligand>
        <name>jasmonate</name>
        <dbReference type="ChEBI" id="CHEBI:58431"/>
    </ligand>
</feature>
<feature type="binding site" evidence="7 13">
    <location>
        <position position="354"/>
    </location>
    <ligand>
        <name>jasmonate</name>
        <dbReference type="ChEBI" id="CHEBI:58431"/>
    </ligand>
</feature>
<feature type="mutagenesis site" description="Reduces enzymatic activity 8-fold." evidence="7">
    <original>Y</original>
    <variation>A</variation>
    <location>
        <position position="135"/>
    </location>
</feature>
<feature type="mutagenesis site" description="Reduces enzymatic activity 5-fold." evidence="7">
    <original>L</original>
    <variation>A</variation>
    <location>
        <position position="142"/>
    </location>
</feature>
<feature type="mutagenesis site" description="Loss of enzymatic activity." evidence="7">
    <original>F</original>
    <variation>A</variation>
    <location>
        <position position="157"/>
    </location>
</feature>
<feature type="mutagenesis site" description="Increases enzymatic activity 1.2-fold." evidence="7">
    <original>F</original>
    <variation>Y</variation>
    <location>
        <position position="157"/>
    </location>
</feature>
<feature type="mutagenesis site" description="Loss of enzymatic activity." evidence="7">
    <original>R</original>
    <variation>A</variation>
    <location>
        <position position="225"/>
    </location>
</feature>
<feature type="mutagenesis site" description="Loss of enzymatic activity." evidence="7">
    <original>H</original>
    <variation>A</variation>
    <location>
        <position position="244"/>
    </location>
</feature>
<feature type="mutagenesis site" description="Reduces enzymatic activity 4-fold." evidence="7">
    <original>D</original>
    <variation>A</variation>
    <location>
        <position position="246"/>
    </location>
</feature>
<feature type="mutagenesis site" description="No effect on enzymatic activity." evidence="7">
    <original>F</original>
    <variation>A</variation>
    <location>
        <position position="317"/>
    </location>
</feature>
<feature type="mutagenesis site" description="Reduces enzymatic activity 2.5-fold." evidence="7">
    <original>F</original>
    <variation>Y</variation>
    <location>
        <position position="317"/>
    </location>
</feature>
<feature type="mutagenesis site" description="Reduces enzymatic activity 5-fold." evidence="7">
    <original>F</original>
    <variation>A</variation>
    <location>
        <position position="346"/>
    </location>
</feature>
<feature type="mutagenesis site" description="No effect on enzymatic activity." evidence="7">
    <original>F</original>
    <variation>Y</variation>
    <location>
        <position position="346"/>
    </location>
</feature>
<feature type="mutagenesis site" description="Reduces enzymatic activity 2-fold." evidence="7">
    <original>R</original>
    <variation>A</variation>
    <location>
        <position position="350"/>
    </location>
</feature>
<feature type="mutagenesis site" description="Reduces enzymatic activity 4-fold." evidence="7">
    <original>I</original>
    <variation>A</variation>
    <location>
        <position position="353"/>
    </location>
</feature>
<feature type="mutagenesis site" description="Reduces enzymatic activity 2.5-fold." evidence="7">
    <original>R</original>
    <variation>A</variation>
    <location>
        <position position="354"/>
    </location>
</feature>
<feature type="sequence conflict" description="In Ref. 4; AAM61665." evidence="10" ref="4">
    <original>E</original>
    <variation>V</variation>
    <location>
        <position position="236"/>
    </location>
</feature>
<feature type="helix" evidence="14">
    <location>
        <begin position="27"/>
        <end position="32"/>
    </location>
</feature>
<feature type="helix" evidence="14">
    <location>
        <begin position="40"/>
        <end position="42"/>
    </location>
</feature>
<feature type="turn" evidence="14">
    <location>
        <begin position="46"/>
        <end position="48"/>
    </location>
</feature>
<feature type="strand" evidence="14">
    <location>
        <begin position="64"/>
        <end position="66"/>
    </location>
</feature>
<feature type="helix" evidence="14">
    <location>
        <begin position="80"/>
        <end position="91"/>
    </location>
</feature>
<feature type="strand" evidence="14">
    <location>
        <begin position="93"/>
        <end position="99"/>
    </location>
</feature>
<feature type="helix" evidence="14">
    <location>
        <begin position="104"/>
        <end position="119"/>
    </location>
</feature>
<feature type="helix" evidence="14">
    <location>
        <begin position="122"/>
        <end position="124"/>
    </location>
</feature>
<feature type="helix" evidence="14">
    <location>
        <begin position="126"/>
        <end position="128"/>
    </location>
</feature>
<feature type="turn" evidence="14">
    <location>
        <begin position="132"/>
        <end position="134"/>
    </location>
</feature>
<feature type="strand" evidence="14">
    <location>
        <begin position="137"/>
        <end position="140"/>
    </location>
</feature>
<feature type="strand" evidence="14">
    <location>
        <begin position="154"/>
        <end position="162"/>
    </location>
</feature>
<feature type="helix" evidence="14">
    <location>
        <begin position="163"/>
        <end position="165"/>
    </location>
</feature>
<feature type="helix" evidence="14">
    <location>
        <begin position="168"/>
        <end position="170"/>
    </location>
</feature>
<feature type="helix" evidence="14">
    <location>
        <begin position="178"/>
        <end position="203"/>
    </location>
</feature>
<feature type="helix" evidence="14">
    <location>
        <begin position="210"/>
        <end position="214"/>
    </location>
</feature>
<feature type="turn" evidence="14">
    <location>
        <begin position="215"/>
        <end position="218"/>
    </location>
</feature>
<feature type="strand" evidence="14">
    <location>
        <begin position="221"/>
        <end position="229"/>
    </location>
</feature>
<feature type="turn" evidence="14">
    <location>
        <begin position="235"/>
        <end position="237"/>
    </location>
</feature>
<feature type="strand" evidence="14">
    <location>
        <begin position="240"/>
        <end position="244"/>
    </location>
</feature>
<feature type="strand" evidence="14">
    <location>
        <begin position="247"/>
        <end position="254"/>
    </location>
</feature>
<feature type="strand" evidence="14">
    <location>
        <begin position="262"/>
        <end position="268"/>
    </location>
</feature>
<feature type="strand" evidence="14">
    <location>
        <begin position="270"/>
        <end position="273"/>
    </location>
</feature>
<feature type="strand" evidence="14">
    <location>
        <begin position="280"/>
        <end position="284"/>
    </location>
</feature>
<feature type="helix" evidence="14">
    <location>
        <begin position="286"/>
        <end position="291"/>
    </location>
</feature>
<feature type="turn" evidence="14">
    <location>
        <begin position="292"/>
        <end position="294"/>
    </location>
</feature>
<feature type="strand" evidence="14">
    <location>
        <begin position="301"/>
        <end position="303"/>
    </location>
</feature>
<feature type="strand" evidence="14">
    <location>
        <begin position="311"/>
        <end position="319"/>
    </location>
</feature>
<feature type="strand" evidence="14">
    <location>
        <begin position="324"/>
        <end position="326"/>
    </location>
</feature>
<feature type="helix" evidence="14">
    <location>
        <begin position="330"/>
        <end position="332"/>
    </location>
</feature>
<feature type="strand" evidence="14">
    <location>
        <begin position="335"/>
        <end position="337"/>
    </location>
</feature>
<feature type="helix" evidence="14">
    <location>
        <begin position="346"/>
        <end position="349"/>
    </location>
</feature>
<feature type="helix" evidence="14">
    <location>
        <begin position="351"/>
        <end position="356"/>
    </location>
</feature>
<feature type="helix" evidence="14">
    <location>
        <begin position="362"/>
        <end position="365"/>
    </location>
</feature>
<accession>Q9FFF6</accession>
<accession>Q8LF06</accession>
<gene>
    <name evidence="8" type="primary">JOX2</name>
    <name evidence="9" type="synonym">JAO2</name>
    <name evidence="11" type="ordered locus">At5g05600</name>
    <name evidence="12" type="ORF">MOP10.14</name>
</gene>
<comment type="function">
    <text evidence="4 5 6 7">2-oxoglutarate-dependent dioxygenase involved in the oxidation of jasmonate (JA), a stress-induced phytohormone synthesized in response to attack by pathogens and herbivores, which triggers the activation of defense responses via the JA-mediated signaling pathway (PubMed:28559313, PubMed:28760569). Converts JA to 12-hydroxyjasmonate (12OH-JA), an inactive form of JA (PubMed:28559313, PubMed:28760569, PubMed:33516967). Is specific to free JA, and cannot oxidize the bioactive form jasmonoyl-L-isoleucine (JA-Ile) or other JA-amino acid conjugates (PubMed:28760569, PubMed:33516967). Prevents over-accumulation of JA and indirectly its bioactive form JA-Ile under stress response (PubMed:28559313, PubMed:28760569). Acts as a negative regulator of JA-mediated defense signaling, by contributing to 12OH-JA accumulation, which represses JA defense responses upon infection by the fungal pathogen Botrytis cinerea (PubMed:28559313, PubMed:28760569). Acts as a negative regulator of JA-mediated defense responses upon infestation by the herbivorous caterpillar Mamestra brassicae (PubMed:28559313). May be involved in the catabolism of cytotoxic polycyclic aromatic hydrocarbons (PAHs) (PubMed:27637093).</text>
</comment>
<comment type="catalytic activity">
    <reaction evidence="5 6 7">
        <text>jasmonate + 2-oxoglutarate + O2 = (1R,2R)-12-hydroxyjasmonate + succinate + CO2</text>
        <dbReference type="Rhea" id="RHEA:67144"/>
        <dbReference type="ChEBI" id="CHEBI:15379"/>
        <dbReference type="ChEBI" id="CHEBI:16526"/>
        <dbReference type="ChEBI" id="CHEBI:16810"/>
        <dbReference type="ChEBI" id="CHEBI:30031"/>
        <dbReference type="ChEBI" id="CHEBI:58431"/>
        <dbReference type="ChEBI" id="CHEBI:132022"/>
    </reaction>
    <physiologicalReaction direction="left-to-right" evidence="5 6 7">
        <dbReference type="Rhea" id="RHEA:67145"/>
    </physiologicalReaction>
</comment>
<comment type="cofactor">
    <cofactor evidence="5 6 7">
        <name>L-ascorbate</name>
        <dbReference type="ChEBI" id="CHEBI:38290"/>
    </cofactor>
</comment>
<comment type="cofactor">
    <cofactor evidence="1 5 6 7">
        <name>Fe(2+)</name>
        <dbReference type="ChEBI" id="CHEBI:29033"/>
    </cofactor>
    <text evidence="1 7">Binds 1 Fe(2+) ion per subunit.</text>
</comment>
<comment type="biophysicochemical properties">
    <kinetics>
        <KM evidence="7">9.3 uM for jasmonate</KM>
    </kinetics>
</comment>
<comment type="induction">
    <text evidence="2 3 4 5 6">Induced by salt stress (PubMed:11351099). Induced by phenanthrene (PubMed:27637093). Down-regulated by UV-B (PubMed:17587374). Induced by wounding (PubMed:28760569). Induced by the infection with the fungal pathogen Botrytis cinerea (PubMed:28559313, PubMed:28760569). Induced by methyl jasmonate (MeJA) (PubMed:28559313). Induced by infestation with the caterpillar Mamestra brassicae (PubMed:28559313).</text>
</comment>
<comment type="disruption phenotype">
    <text evidence="4 5 6">Constitutive activation of stress-induced jasmonate-dependent responses and increased antifungal resistance to Botrytis cinerea (PubMed:28760569). The quadruple mutant jox1, jox2, jox3 and jox4 exhibit reduced root and shoot growth, delayed flowering, reduced seed production, constitutively elevated jasmonate and jasmonoyl-L-isoleucine levels, and enhanced resistance to the necrotrophic fungal pathogen Botrytis cinerea and the herbivorous caterpillar Mamestra brassicae (PubMed:28559313). No visible phenotype under normal growth conditions, but mutant seedlings have increased tolerance to the cytotoxic compound phenanthrene.</text>
</comment>
<comment type="similarity">
    <text evidence="10">Belongs to the iron/ascorbate-dependent oxidoreductase family.</text>
</comment>
<organism>
    <name type="scientific">Arabidopsis thaliana</name>
    <name type="common">Mouse-ear cress</name>
    <dbReference type="NCBI Taxonomy" id="3702"/>
    <lineage>
        <taxon>Eukaryota</taxon>
        <taxon>Viridiplantae</taxon>
        <taxon>Streptophyta</taxon>
        <taxon>Embryophyta</taxon>
        <taxon>Tracheophyta</taxon>
        <taxon>Spermatophyta</taxon>
        <taxon>Magnoliopsida</taxon>
        <taxon>eudicotyledons</taxon>
        <taxon>Gunneridae</taxon>
        <taxon>Pentapetalae</taxon>
        <taxon>rosids</taxon>
        <taxon>malvids</taxon>
        <taxon>Brassicales</taxon>
        <taxon>Brassicaceae</taxon>
        <taxon>Camelineae</taxon>
        <taxon>Arabidopsis</taxon>
    </lineage>
</organism>